<organism>
    <name type="scientific">Lactobacillus johnsonii (strain CNCM I-12250 / La1 / NCC 533)</name>
    <dbReference type="NCBI Taxonomy" id="257314"/>
    <lineage>
        <taxon>Bacteria</taxon>
        <taxon>Bacillati</taxon>
        <taxon>Bacillota</taxon>
        <taxon>Bacilli</taxon>
        <taxon>Lactobacillales</taxon>
        <taxon>Lactobacillaceae</taxon>
        <taxon>Lactobacillus</taxon>
    </lineage>
</organism>
<protein>
    <recommendedName>
        <fullName evidence="1">Histidine--tRNA ligase</fullName>
        <ecNumber evidence="1">6.1.1.21</ecNumber>
    </recommendedName>
    <alternativeName>
        <fullName evidence="1">Histidyl-tRNA synthetase</fullName>
        <shortName evidence="1">HisRS</shortName>
    </alternativeName>
</protein>
<comment type="catalytic activity">
    <reaction evidence="1">
        <text>tRNA(His) + L-histidine + ATP = L-histidyl-tRNA(His) + AMP + diphosphate + H(+)</text>
        <dbReference type="Rhea" id="RHEA:17313"/>
        <dbReference type="Rhea" id="RHEA-COMP:9665"/>
        <dbReference type="Rhea" id="RHEA-COMP:9689"/>
        <dbReference type="ChEBI" id="CHEBI:15378"/>
        <dbReference type="ChEBI" id="CHEBI:30616"/>
        <dbReference type="ChEBI" id="CHEBI:33019"/>
        <dbReference type="ChEBI" id="CHEBI:57595"/>
        <dbReference type="ChEBI" id="CHEBI:78442"/>
        <dbReference type="ChEBI" id="CHEBI:78527"/>
        <dbReference type="ChEBI" id="CHEBI:456215"/>
        <dbReference type="EC" id="6.1.1.21"/>
    </reaction>
</comment>
<comment type="subunit">
    <text evidence="1">Homodimer.</text>
</comment>
<comment type="subcellular location">
    <subcellularLocation>
        <location evidence="1">Cytoplasm</location>
    </subcellularLocation>
</comment>
<comment type="similarity">
    <text evidence="1">Belongs to the class-II aminoacyl-tRNA synthetase family.</text>
</comment>
<evidence type="ECO:0000255" key="1">
    <source>
        <dbReference type="HAMAP-Rule" id="MF_00127"/>
    </source>
</evidence>
<name>SYH_LACJO</name>
<accession>P60916</accession>
<keyword id="KW-0030">Aminoacyl-tRNA synthetase</keyword>
<keyword id="KW-0067">ATP-binding</keyword>
<keyword id="KW-0963">Cytoplasm</keyword>
<keyword id="KW-0436">Ligase</keyword>
<keyword id="KW-0547">Nucleotide-binding</keyword>
<keyword id="KW-0648">Protein biosynthesis</keyword>
<proteinExistence type="inferred from homology"/>
<gene>
    <name evidence="1" type="primary">hisS</name>
    <name type="ordered locus">LJ_1392</name>
</gene>
<reference key="1">
    <citation type="journal article" date="2004" name="Proc. Natl. Acad. Sci. U.S.A.">
        <title>The genome sequence of the probiotic intestinal bacterium Lactobacillus johnsonii NCC 533.</title>
        <authorList>
            <person name="Pridmore R.D."/>
            <person name="Berger B."/>
            <person name="Desiere F."/>
            <person name="Vilanova D."/>
            <person name="Barretto C."/>
            <person name="Pittet A.-C."/>
            <person name="Zwahlen M.-C."/>
            <person name="Rouvet M."/>
            <person name="Altermann E."/>
            <person name="Barrangou R."/>
            <person name="Mollet B."/>
            <person name="Mercenier A."/>
            <person name="Klaenhammer T."/>
            <person name="Arigoni F."/>
            <person name="Schell M.A."/>
        </authorList>
    </citation>
    <scope>NUCLEOTIDE SEQUENCE [LARGE SCALE GENOMIC DNA]</scope>
    <source>
        <strain>CNCM I-1225 / La1 / NCC 533</strain>
    </source>
</reference>
<sequence length="428" mass="48896">MKVQRPKGTVDILPGESGSWEKVESIARNFFKRANYREIRTPSFENYEVFSRSSGETSDVVSKEMYDFNDKGGRHIALRPEGTAGVVRAYVENKLYGPDVVKPFSVYYIDNTFRYERPQAGRQREFHQIGVESFGSDSPLADVETLMMAHDLLAELGVKNYELHINSLGNAQVREAYHDALVNYFTPVKDQLSEDSQRRLSQNPLRILDSKDERDKKFLPNAPKIVDYLDDESRENFKTITDMLEQLGINYVMDDDLVRGLDYYTGIIFEFMVEDKNLWESATTILGGGRYNHLVEEFDGPETPAVGFGIGEERLMLVLKEQNPDLFQEEGIDFFITNIGAGTEFKAVEVARSLREQGFSAQYDVDQKKLKQQFRKADRVHATFVITLGAKELENGVLNIKRLSDGKTIDLSLEDINNMQDVINKLED</sequence>
<feature type="chain" id="PRO_0000136178" description="Histidine--tRNA ligase">
    <location>
        <begin position="1"/>
        <end position="428"/>
    </location>
</feature>
<dbReference type="EC" id="6.1.1.21" evidence="1"/>
<dbReference type="EMBL" id="AE017198">
    <property type="protein sequence ID" value="AAS09158.1"/>
    <property type="molecule type" value="Genomic_DNA"/>
</dbReference>
<dbReference type="RefSeq" id="WP_004897182.1">
    <property type="nucleotide sequence ID" value="NC_005362.1"/>
</dbReference>
<dbReference type="SMR" id="P60916"/>
<dbReference type="GeneID" id="83570231"/>
<dbReference type="KEGG" id="ljo:LJ_1392"/>
<dbReference type="eggNOG" id="COG0124">
    <property type="taxonomic scope" value="Bacteria"/>
</dbReference>
<dbReference type="HOGENOM" id="CLU_025113_1_1_9"/>
<dbReference type="Proteomes" id="UP000000581">
    <property type="component" value="Chromosome"/>
</dbReference>
<dbReference type="GO" id="GO:0005737">
    <property type="term" value="C:cytoplasm"/>
    <property type="evidence" value="ECO:0007669"/>
    <property type="project" value="UniProtKB-SubCell"/>
</dbReference>
<dbReference type="GO" id="GO:0005524">
    <property type="term" value="F:ATP binding"/>
    <property type="evidence" value="ECO:0007669"/>
    <property type="project" value="UniProtKB-UniRule"/>
</dbReference>
<dbReference type="GO" id="GO:0140096">
    <property type="term" value="F:catalytic activity, acting on a protein"/>
    <property type="evidence" value="ECO:0007669"/>
    <property type="project" value="UniProtKB-ARBA"/>
</dbReference>
<dbReference type="GO" id="GO:0004821">
    <property type="term" value="F:histidine-tRNA ligase activity"/>
    <property type="evidence" value="ECO:0007669"/>
    <property type="project" value="UniProtKB-UniRule"/>
</dbReference>
<dbReference type="GO" id="GO:0016740">
    <property type="term" value="F:transferase activity"/>
    <property type="evidence" value="ECO:0007669"/>
    <property type="project" value="UniProtKB-ARBA"/>
</dbReference>
<dbReference type="GO" id="GO:0006427">
    <property type="term" value="P:histidyl-tRNA aminoacylation"/>
    <property type="evidence" value="ECO:0007669"/>
    <property type="project" value="UniProtKB-UniRule"/>
</dbReference>
<dbReference type="CDD" id="cd00773">
    <property type="entry name" value="HisRS-like_core"/>
    <property type="match status" value="1"/>
</dbReference>
<dbReference type="Gene3D" id="3.40.50.800">
    <property type="entry name" value="Anticodon-binding domain"/>
    <property type="match status" value="1"/>
</dbReference>
<dbReference type="Gene3D" id="3.30.930.10">
    <property type="entry name" value="Bira Bifunctional Protein, Domain 2"/>
    <property type="match status" value="1"/>
</dbReference>
<dbReference type="HAMAP" id="MF_00127">
    <property type="entry name" value="His_tRNA_synth"/>
    <property type="match status" value="1"/>
</dbReference>
<dbReference type="InterPro" id="IPR006195">
    <property type="entry name" value="aa-tRNA-synth_II"/>
</dbReference>
<dbReference type="InterPro" id="IPR045864">
    <property type="entry name" value="aa-tRNA-synth_II/BPL/LPL"/>
</dbReference>
<dbReference type="InterPro" id="IPR004154">
    <property type="entry name" value="Anticodon-bd"/>
</dbReference>
<dbReference type="InterPro" id="IPR036621">
    <property type="entry name" value="Anticodon-bd_dom_sf"/>
</dbReference>
<dbReference type="InterPro" id="IPR015807">
    <property type="entry name" value="His-tRNA-ligase"/>
</dbReference>
<dbReference type="InterPro" id="IPR041715">
    <property type="entry name" value="HisRS-like_core"/>
</dbReference>
<dbReference type="InterPro" id="IPR004516">
    <property type="entry name" value="HisRS/HisZ"/>
</dbReference>
<dbReference type="NCBIfam" id="TIGR00442">
    <property type="entry name" value="hisS"/>
    <property type="match status" value="1"/>
</dbReference>
<dbReference type="PANTHER" id="PTHR43707:SF1">
    <property type="entry name" value="HISTIDINE--TRNA LIGASE, MITOCHONDRIAL-RELATED"/>
    <property type="match status" value="1"/>
</dbReference>
<dbReference type="PANTHER" id="PTHR43707">
    <property type="entry name" value="HISTIDYL-TRNA SYNTHETASE"/>
    <property type="match status" value="1"/>
</dbReference>
<dbReference type="Pfam" id="PF03129">
    <property type="entry name" value="HGTP_anticodon"/>
    <property type="match status" value="1"/>
</dbReference>
<dbReference type="Pfam" id="PF13393">
    <property type="entry name" value="tRNA-synt_His"/>
    <property type="match status" value="1"/>
</dbReference>
<dbReference type="PIRSF" id="PIRSF001549">
    <property type="entry name" value="His-tRNA_synth"/>
    <property type="match status" value="1"/>
</dbReference>
<dbReference type="SUPFAM" id="SSF52954">
    <property type="entry name" value="Class II aaRS ABD-related"/>
    <property type="match status" value="1"/>
</dbReference>
<dbReference type="SUPFAM" id="SSF55681">
    <property type="entry name" value="Class II aaRS and biotin synthetases"/>
    <property type="match status" value="1"/>
</dbReference>
<dbReference type="PROSITE" id="PS50862">
    <property type="entry name" value="AA_TRNA_LIGASE_II"/>
    <property type="match status" value="1"/>
</dbReference>